<organism>
    <name type="scientific">Arabidopsis thaliana</name>
    <name type="common">Mouse-ear cress</name>
    <dbReference type="NCBI Taxonomy" id="3702"/>
    <lineage>
        <taxon>Eukaryota</taxon>
        <taxon>Viridiplantae</taxon>
        <taxon>Streptophyta</taxon>
        <taxon>Embryophyta</taxon>
        <taxon>Tracheophyta</taxon>
        <taxon>Spermatophyta</taxon>
        <taxon>Magnoliopsida</taxon>
        <taxon>eudicotyledons</taxon>
        <taxon>Gunneridae</taxon>
        <taxon>Pentapetalae</taxon>
        <taxon>rosids</taxon>
        <taxon>malvids</taxon>
        <taxon>Brassicales</taxon>
        <taxon>Brassicaceae</taxon>
        <taxon>Camelineae</taxon>
        <taxon>Arabidopsis</taxon>
    </lineage>
</organism>
<feature type="signal peptide" evidence="1">
    <location>
        <begin position="1"/>
        <end position="28"/>
    </location>
</feature>
<feature type="chain" id="PRO_0000295048" description="Cysteine-rich receptor-like protein kinase 1">
    <location>
        <begin position="29"/>
        <end position="615"/>
    </location>
</feature>
<feature type="topological domain" description="Extracellular" evidence="1">
    <location>
        <begin position="29"/>
        <end position="266"/>
    </location>
</feature>
<feature type="transmembrane region" description="Helical" evidence="1">
    <location>
        <begin position="267"/>
        <end position="287"/>
    </location>
</feature>
<feature type="topological domain" description="Cytoplasmic" evidence="1">
    <location>
        <begin position="288"/>
        <end position="615"/>
    </location>
</feature>
<feature type="domain" description="Gnk2-homologous 1" evidence="3">
    <location>
        <begin position="29"/>
        <end position="131"/>
    </location>
</feature>
<feature type="domain" description="Gnk2-homologous 2" evidence="3">
    <location>
        <begin position="137"/>
        <end position="237"/>
    </location>
</feature>
<feature type="domain" description="Protein kinase" evidence="2">
    <location>
        <begin position="318"/>
        <end position="602"/>
    </location>
</feature>
<feature type="active site" description="Proton acceptor" evidence="2 4">
    <location>
        <position position="443"/>
    </location>
</feature>
<feature type="binding site" evidence="2">
    <location>
        <begin position="324"/>
        <end position="332"/>
    </location>
    <ligand>
        <name>ATP</name>
        <dbReference type="ChEBI" id="CHEBI:30616"/>
    </ligand>
</feature>
<feature type="binding site" evidence="2">
    <location>
        <position position="346"/>
    </location>
    <ligand>
        <name>ATP</name>
        <dbReference type="ChEBI" id="CHEBI:30616"/>
    </ligand>
</feature>
<feature type="glycosylation site" description="N-linked (GlcNAc...) asparagine" evidence="1">
    <location>
        <position position="100"/>
    </location>
</feature>
<feature type="glycosylation site" description="N-linked (GlcNAc...) asparagine" evidence="1">
    <location>
        <position position="165"/>
    </location>
</feature>
<feature type="sequence conflict" description="In Ref. 1; AAC50044." evidence="8" ref="1">
    <original>D</original>
    <variation>DD</variation>
    <location>
        <position position="240"/>
    </location>
</feature>
<feature type="sequence conflict" description="In Ref. 1; AAC50044." evidence="8" ref="1">
    <original>S</original>
    <variation>SS</variation>
    <location>
        <position position="578"/>
    </location>
</feature>
<comment type="catalytic activity">
    <reaction>
        <text>L-seryl-[protein] + ATP = O-phospho-L-seryl-[protein] + ADP + H(+)</text>
        <dbReference type="Rhea" id="RHEA:17989"/>
        <dbReference type="Rhea" id="RHEA-COMP:9863"/>
        <dbReference type="Rhea" id="RHEA-COMP:11604"/>
        <dbReference type="ChEBI" id="CHEBI:15378"/>
        <dbReference type="ChEBI" id="CHEBI:29999"/>
        <dbReference type="ChEBI" id="CHEBI:30616"/>
        <dbReference type="ChEBI" id="CHEBI:83421"/>
        <dbReference type="ChEBI" id="CHEBI:456216"/>
        <dbReference type="EC" id="2.7.11.1"/>
    </reaction>
</comment>
<comment type="catalytic activity">
    <reaction>
        <text>L-threonyl-[protein] + ATP = O-phospho-L-threonyl-[protein] + ADP + H(+)</text>
        <dbReference type="Rhea" id="RHEA:46608"/>
        <dbReference type="Rhea" id="RHEA-COMP:11060"/>
        <dbReference type="Rhea" id="RHEA-COMP:11605"/>
        <dbReference type="ChEBI" id="CHEBI:15378"/>
        <dbReference type="ChEBI" id="CHEBI:30013"/>
        <dbReference type="ChEBI" id="CHEBI:30616"/>
        <dbReference type="ChEBI" id="CHEBI:61977"/>
        <dbReference type="ChEBI" id="CHEBI:456216"/>
        <dbReference type="EC" id="2.7.11.1"/>
    </reaction>
</comment>
<comment type="subcellular location">
    <subcellularLocation>
        <location evidence="8">Membrane</location>
        <topology evidence="8">Single-pass membrane protein</topology>
    </subcellularLocation>
</comment>
<comment type="tissue specificity">
    <text evidence="5">Expressed in the whole plant at low levels.</text>
</comment>
<comment type="similarity">
    <text evidence="2">Belongs to the protein kinase superfamily. Ser/Thr protein kinase family. CRK subfamily.</text>
</comment>
<comment type="sequence caution" evidence="8">
    <conflict type="frameshift">
        <sequence resource="EMBL-CDS" id="AAC50044"/>
    </conflict>
</comment>
<comment type="sequence caution" evidence="8">
    <conflict type="frameshift">
        <sequence resource="EMBL-CDS" id="AAF79292"/>
    </conflict>
</comment>
<proteinExistence type="evidence at transcript level"/>
<sequence>MQICASIAQFLAWVSFLVLLATVGSSSSSESLLNCQPLDHHLVNPSRLLGFLRAMSSVNDFITNDKLWVVSSITDVSPPIYVFLQCREDLSVSDCRHCFNESRLELERKCSGSGGRIHSDRCFLRFDDRDFSEEFVDPTFDKANCEETGTGFGEFWRFLDEALVNVTLKAVKNGGFGAASVIKTEAVYALAQCWQTLDENTCRECLVNARSSLRACDGHEARAFFTGCYLKYSTHKFFDDAAEHKPDADQRNFIRSSFFPHLSDRDVTRLAIAAISLSILTSLGAFISYRRVSRKRKAQVPSCVNFKYEMLEKATESFHDSMKLGQGGAGSVYKGILPDGRIVAVKKLFFNTREWADQFFNEVNLISGVQHKNLVRLLGCSIEGPKSLLVYEYVHNRSLDQILFMKNTVHILSWKQRFNIIIGISEGLEYLHRGSEVKIIHRDIKTSNILLDRNLSPKIADFGLIRSMGTDKTQTNTGIAGTLGYLAPEYLIKGQLTEKADVYAFGVLIIEIVTGKKNNAFTQGTSSVLYSVWEHFKANTLDRSIDPRLKGSFVEEEALKVLQIGLLCVQSSVELRPSMSEIVFMLQNKDSKFEYPKQPPFLSASVLMPDEETRV</sequence>
<keyword id="KW-0067">ATP-binding</keyword>
<keyword id="KW-0325">Glycoprotein</keyword>
<keyword id="KW-0418">Kinase</keyword>
<keyword id="KW-0472">Membrane</keyword>
<keyword id="KW-0547">Nucleotide-binding</keyword>
<keyword id="KW-0675">Receptor</keyword>
<keyword id="KW-1185">Reference proteome</keyword>
<keyword id="KW-0677">Repeat</keyword>
<keyword id="KW-0723">Serine/threonine-protein kinase</keyword>
<keyword id="KW-0732">Signal</keyword>
<keyword id="KW-0808">Transferase</keyword>
<keyword id="KW-0812">Transmembrane</keyword>
<keyword id="KW-1133">Transmembrane helix</keyword>
<protein>
    <recommendedName>
        <fullName evidence="8">Cysteine-rich receptor-like protein kinase 1</fullName>
        <shortName evidence="6">Cysteine-rich RLK1</shortName>
        <ecNumber>2.7.11.1</ecNumber>
    </recommendedName>
    <alternativeName>
        <fullName evidence="7">Receptor-like kinase in flowers 2</fullName>
    </alternativeName>
</protein>
<dbReference type="EC" id="2.7.11.1"/>
<dbReference type="EMBL" id="AF024649">
    <property type="protein sequence ID" value="AAC50044.1"/>
    <property type="status" value="ALT_FRAME"/>
    <property type="molecule type" value="mRNA"/>
</dbReference>
<dbReference type="EMBL" id="AC068602">
    <property type="protein sequence ID" value="AAF79292.1"/>
    <property type="status" value="ALT_FRAME"/>
    <property type="molecule type" value="Genomic_DNA"/>
</dbReference>
<dbReference type="EMBL" id="CP002684">
    <property type="protein sequence ID" value="AEE29801.2"/>
    <property type="molecule type" value="Genomic_DNA"/>
</dbReference>
<dbReference type="RefSeq" id="NP_001319040.1">
    <property type="nucleotide sequence ID" value="NM_001332384.1"/>
</dbReference>
<dbReference type="SMR" id="Q9LMB9"/>
<dbReference type="BioGRID" id="23730">
    <property type="interactions" value="2"/>
</dbReference>
<dbReference type="IntAct" id="Q9LMB9">
    <property type="interactions" value="2"/>
</dbReference>
<dbReference type="STRING" id="3702.Q9LMB9"/>
<dbReference type="GlyCosmos" id="Q9LMB9">
    <property type="glycosylation" value="2 sites, No reported glycans"/>
</dbReference>
<dbReference type="GlyGen" id="Q9LMB9">
    <property type="glycosylation" value="2 sites"/>
</dbReference>
<dbReference type="PaxDb" id="3702-AT1G19090.1"/>
<dbReference type="GeneID" id="838491"/>
<dbReference type="KEGG" id="ath:AT1G19090"/>
<dbReference type="Araport" id="AT1G19090"/>
<dbReference type="TAIR" id="AT1G19090"/>
<dbReference type="eggNOG" id="ENOG502QRU4">
    <property type="taxonomic scope" value="Eukaryota"/>
</dbReference>
<dbReference type="HOGENOM" id="CLU_000288_35_6_1"/>
<dbReference type="InParanoid" id="Q9LMB9"/>
<dbReference type="PhylomeDB" id="Q9LMB9"/>
<dbReference type="PRO" id="PR:Q9LMB9"/>
<dbReference type="Proteomes" id="UP000006548">
    <property type="component" value="Chromosome 1"/>
</dbReference>
<dbReference type="ExpressionAtlas" id="Q9LMB9">
    <property type="expression patterns" value="baseline and differential"/>
</dbReference>
<dbReference type="GO" id="GO:0016020">
    <property type="term" value="C:membrane"/>
    <property type="evidence" value="ECO:0007669"/>
    <property type="project" value="UniProtKB-SubCell"/>
</dbReference>
<dbReference type="GO" id="GO:0005524">
    <property type="term" value="F:ATP binding"/>
    <property type="evidence" value="ECO:0007669"/>
    <property type="project" value="UniProtKB-KW"/>
</dbReference>
<dbReference type="GO" id="GO:0106310">
    <property type="term" value="F:protein serine kinase activity"/>
    <property type="evidence" value="ECO:0007669"/>
    <property type="project" value="RHEA"/>
</dbReference>
<dbReference type="GO" id="GO:0004674">
    <property type="term" value="F:protein serine/threonine kinase activity"/>
    <property type="evidence" value="ECO:0000318"/>
    <property type="project" value="GO_Central"/>
</dbReference>
<dbReference type="CDD" id="cd23509">
    <property type="entry name" value="Gnk2-like"/>
    <property type="match status" value="2"/>
</dbReference>
<dbReference type="CDD" id="cd14066">
    <property type="entry name" value="STKc_IRAK"/>
    <property type="match status" value="1"/>
</dbReference>
<dbReference type="FunFam" id="1.10.510.10:FF:000336">
    <property type="entry name" value="Cysteine-rich receptor-like protein kinase 2"/>
    <property type="match status" value="1"/>
</dbReference>
<dbReference type="FunFam" id="3.30.430.20:FF:000015">
    <property type="entry name" value="Cysteine-rich receptor-like protein kinase 3"/>
    <property type="match status" value="1"/>
</dbReference>
<dbReference type="FunFam" id="3.30.200.20:FF:001208">
    <property type="entry name" value="Putative DUF26-domain receptor-like protein kinase family protein"/>
    <property type="match status" value="1"/>
</dbReference>
<dbReference type="Gene3D" id="3.30.430.20">
    <property type="entry name" value="Gnk2 domain, C-X8-C-X2-C motif"/>
    <property type="match status" value="2"/>
</dbReference>
<dbReference type="Gene3D" id="3.30.200.20">
    <property type="entry name" value="Phosphorylase Kinase, domain 1"/>
    <property type="match status" value="1"/>
</dbReference>
<dbReference type="Gene3D" id="1.10.510.10">
    <property type="entry name" value="Transferase(Phosphotransferase) domain 1"/>
    <property type="match status" value="1"/>
</dbReference>
<dbReference type="InterPro" id="IPR052059">
    <property type="entry name" value="CR_Ser/Thr_kinase"/>
</dbReference>
<dbReference type="InterPro" id="IPR002902">
    <property type="entry name" value="GNK2"/>
</dbReference>
<dbReference type="InterPro" id="IPR038408">
    <property type="entry name" value="GNK2_sf"/>
</dbReference>
<dbReference type="InterPro" id="IPR011009">
    <property type="entry name" value="Kinase-like_dom_sf"/>
</dbReference>
<dbReference type="InterPro" id="IPR000719">
    <property type="entry name" value="Prot_kinase_dom"/>
</dbReference>
<dbReference type="InterPro" id="IPR008271">
    <property type="entry name" value="Ser/Thr_kinase_AS"/>
</dbReference>
<dbReference type="PANTHER" id="PTHR47973">
    <property type="entry name" value="CYSTEINE-RICH RECEPTOR-LIKE PROTEIN KINASE 3"/>
    <property type="match status" value="1"/>
</dbReference>
<dbReference type="Pfam" id="PF00069">
    <property type="entry name" value="Pkinase"/>
    <property type="match status" value="1"/>
</dbReference>
<dbReference type="Pfam" id="PF01657">
    <property type="entry name" value="Stress-antifung"/>
    <property type="match status" value="2"/>
</dbReference>
<dbReference type="SMART" id="SM00220">
    <property type="entry name" value="S_TKc"/>
    <property type="match status" value="1"/>
</dbReference>
<dbReference type="SUPFAM" id="SSF56112">
    <property type="entry name" value="Protein kinase-like (PK-like)"/>
    <property type="match status" value="1"/>
</dbReference>
<dbReference type="PROSITE" id="PS51473">
    <property type="entry name" value="GNK2"/>
    <property type="match status" value="2"/>
</dbReference>
<dbReference type="PROSITE" id="PS50011">
    <property type="entry name" value="PROTEIN_KINASE_DOM"/>
    <property type="match status" value="1"/>
</dbReference>
<dbReference type="PROSITE" id="PS00108">
    <property type="entry name" value="PROTEIN_KINASE_ST"/>
    <property type="match status" value="1"/>
</dbReference>
<evidence type="ECO:0000255" key="1"/>
<evidence type="ECO:0000255" key="2">
    <source>
        <dbReference type="PROSITE-ProRule" id="PRU00159"/>
    </source>
</evidence>
<evidence type="ECO:0000255" key="3">
    <source>
        <dbReference type="PROSITE-ProRule" id="PRU00806"/>
    </source>
</evidence>
<evidence type="ECO:0000255" key="4">
    <source>
        <dbReference type="PROSITE-ProRule" id="PRU10027"/>
    </source>
</evidence>
<evidence type="ECO:0000269" key="5">
    <source>
    </source>
</evidence>
<evidence type="ECO:0000303" key="6">
    <source>
    </source>
</evidence>
<evidence type="ECO:0000303" key="7">
    <source>
    </source>
</evidence>
<evidence type="ECO:0000305" key="8"/>
<name>CRK1_ARATH</name>
<gene>
    <name evidence="6" type="primary">CRK1</name>
    <name evidence="7" type="synonym">RKF2</name>
    <name type="ordered locus">At1g19090</name>
    <name type="ORF">F14D16.24</name>
</gene>
<reference key="1">
    <citation type="journal article" date="1998" name="Plant Mol. Biol.">
        <title>Identification by PCR of receptor-like protein kinases from Arabidopsis flowers.</title>
        <authorList>
            <person name="Takahashi T."/>
            <person name="Mu J.-H."/>
            <person name="Gasch A."/>
            <person name="Chua N.-H."/>
        </authorList>
    </citation>
    <scope>NUCLEOTIDE SEQUENCE [MRNA]</scope>
    <scope>TISSUE SPECIFICITY</scope>
    <source>
        <strain>cv. Columbia</strain>
    </source>
</reference>
<reference key="2">
    <citation type="journal article" date="2000" name="Nature">
        <title>Sequence and analysis of chromosome 1 of the plant Arabidopsis thaliana.</title>
        <authorList>
            <person name="Theologis A."/>
            <person name="Ecker J.R."/>
            <person name="Palm C.J."/>
            <person name="Federspiel N.A."/>
            <person name="Kaul S."/>
            <person name="White O."/>
            <person name="Alonso J."/>
            <person name="Altafi H."/>
            <person name="Araujo R."/>
            <person name="Bowman C.L."/>
            <person name="Brooks S.Y."/>
            <person name="Buehler E."/>
            <person name="Chan A."/>
            <person name="Chao Q."/>
            <person name="Chen H."/>
            <person name="Cheuk R.F."/>
            <person name="Chin C.W."/>
            <person name="Chung M.K."/>
            <person name="Conn L."/>
            <person name="Conway A.B."/>
            <person name="Conway A.R."/>
            <person name="Creasy T.H."/>
            <person name="Dewar K."/>
            <person name="Dunn P."/>
            <person name="Etgu P."/>
            <person name="Feldblyum T.V."/>
            <person name="Feng J.-D."/>
            <person name="Fong B."/>
            <person name="Fujii C.Y."/>
            <person name="Gill J.E."/>
            <person name="Goldsmith A.D."/>
            <person name="Haas B."/>
            <person name="Hansen N.F."/>
            <person name="Hughes B."/>
            <person name="Huizar L."/>
            <person name="Hunter J.L."/>
            <person name="Jenkins J."/>
            <person name="Johnson-Hopson C."/>
            <person name="Khan S."/>
            <person name="Khaykin E."/>
            <person name="Kim C.J."/>
            <person name="Koo H.L."/>
            <person name="Kremenetskaia I."/>
            <person name="Kurtz D.B."/>
            <person name="Kwan A."/>
            <person name="Lam B."/>
            <person name="Langin-Hooper S."/>
            <person name="Lee A."/>
            <person name="Lee J.M."/>
            <person name="Lenz C.A."/>
            <person name="Li J.H."/>
            <person name="Li Y.-P."/>
            <person name="Lin X."/>
            <person name="Liu S.X."/>
            <person name="Liu Z.A."/>
            <person name="Luros J.S."/>
            <person name="Maiti R."/>
            <person name="Marziali A."/>
            <person name="Militscher J."/>
            <person name="Miranda M."/>
            <person name="Nguyen M."/>
            <person name="Nierman W.C."/>
            <person name="Osborne B.I."/>
            <person name="Pai G."/>
            <person name="Peterson J."/>
            <person name="Pham P.K."/>
            <person name="Rizzo M."/>
            <person name="Rooney T."/>
            <person name="Rowley D."/>
            <person name="Sakano H."/>
            <person name="Salzberg S.L."/>
            <person name="Schwartz J.R."/>
            <person name="Shinn P."/>
            <person name="Southwick A.M."/>
            <person name="Sun H."/>
            <person name="Tallon L.J."/>
            <person name="Tambunga G."/>
            <person name="Toriumi M.J."/>
            <person name="Town C.D."/>
            <person name="Utterback T."/>
            <person name="Van Aken S."/>
            <person name="Vaysberg M."/>
            <person name="Vysotskaia V.S."/>
            <person name="Walker M."/>
            <person name="Wu D."/>
            <person name="Yu G."/>
            <person name="Fraser C.M."/>
            <person name="Venter J.C."/>
            <person name="Davis R.W."/>
        </authorList>
    </citation>
    <scope>NUCLEOTIDE SEQUENCE [LARGE SCALE GENOMIC DNA]</scope>
    <source>
        <strain>cv. Columbia</strain>
    </source>
</reference>
<reference key="3">
    <citation type="journal article" date="2017" name="Plant J.">
        <title>Araport11: a complete reannotation of the Arabidopsis thaliana reference genome.</title>
        <authorList>
            <person name="Cheng C.Y."/>
            <person name="Krishnakumar V."/>
            <person name="Chan A.P."/>
            <person name="Thibaud-Nissen F."/>
            <person name="Schobel S."/>
            <person name="Town C.D."/>
        </authorList>
    </citation>
    <scope>GENOME REANNOTATION</scope>
    <source>
        <strain>cv. Columbia</strain>
    </source>
</reference>
<reference key="4">
    <citation type="journal article" date="2001" name="Plant Physiol.">
        <title>A superfamily of proteins with novel cysteine-rich repeats.</title>
        <authorList>
            <person name="Chen Z."/>
        </authorList>
    </citation>
    <scope>GENE FAMILY ORGANIZATION</scope>
    <scope>NOMENCLATURE</scope>
</reference>
<accession>Q9LMB9</accession>
<accession>F4IE05</accession>
<accession>O22580</accession>